<proteinExistence type="inferred from homology"/>
<name>RS13_MACCJ</name>
<accession>B9E9L5</accession>
<dbReference type="EMBL" id="AP009484">
    <property type="protein sequence ID" value="BAH16926.1"/>
    <property type="molecule type" value="Genomic_DNA"/>
</dbReference>
<dbReference type="RefSeq" id="WP_012656127.1">
    <property type="nucleotide sequence ID" value="NC_011999.1"/>
</dbReference>
<dbReference type="SMR" id="B9E9L5"/>
<dbReference type="STRING" id="458233.MCCL_0219"/>
<dbReference type="GeneID" id="35294495"/>
<dbReference type="GeneID" id="61130642"/>
<dbReference type="KEGG" id="mcl:MCCL_0219"/>
<dbReference type="eggNOG" id="COG0099">
    <property type="taxonomic scope" value="Bacteria"/>
</dbReference>
<dbReference type="HOGENOM" id="CLU_103849_1_1_9"/>
<dbReference type="OrthoDB" id="9803610at2"/>
<dbReference type="Proteomes" id="UP000001383">
    <property type="component" value="Chromosome"/>
</dbReference>
<dbReference type="GO" id="GO:0005829">
    <property type="term" value="C:cytosol"/>
    <property type="evidence" value="ECO:0007669"/>
    <property type="project" value="TreeGrafter"/>
</dbReference>
<dbReference type="GO" id="GO:0015935">
    <property type="term" value="C:small ribosomal subunit"/>
    <property type="evidence" value="ECO:0007669"/>
    <property type="project" value="TreeGrafter"/>
</dbReference>
<dbReference type="GO" id="GO:0019843">
    <property type="term" value="F:rRNA binding"/>
    <property type="evidence" value="ECO:0007669"/>
    <property type="project" value="UniProtKB-UniRule"/>
</dbReference>
<dbReference type="GO" id="GO:0003735">
    <property type="term" value="F:structural constituent of ribosome"/>
    <property type="evidence" value="ECO:0007669"/>
    <property type="project" value="InterPro"/>
</dbReference>
<dbReference type="GO" id="GO:0000049">
    <property type="term" value="F:tRNA binding"/>
    <property type="evidence" value="ECO:0007669"/>
    <property type="project" value="UniProtKB-UniRule"/>
</dbReference>
<dbReference type="GO" id="GO:0006412">
    <property type="term" value="P:translation"/>
    <property type="evidence" value="ECO:0007669"/>
    <property type="project" value="UniProtKB-UniRule"/>
</dbReference>
<dbReference type="FunFam" id="1.10.8.50:FF:000001">
    <property type="entry name" value="30S ribosomal protein S13"/>
    <property type="match status" value="1"/>
</dbReference>
<dbReference type="FunFam" id="4.10.910.10:FF:000001">
    <property type="entry name" value="30S ribosomal protein S13"/>
    <property type="match status" value="1"/>
</dbReference>
<dbReference type="Gene3D" id="1.10.8.50">
    <property type="match status" value="1"/>
</dbReference>
<dbReference type="Gene3D" id="4.10.910.10">
    <property type="entry name" value="30s ribosomal protein s13, domain 2"/>
    <property type="match status" value="1"/>
</dbReference>
<dbReference type="HAMAP" id="MF_01315">
    <property type="entry name" value="Ribosomal_uS13"/>
    <property type="match status" value="1"/>
</dbReference>
<dbReference type="InterPro" id="IPR027437">
    <property type="entry name" value="Rbsml_uS13_C"/>
</dbReference>
<dbReference type="InterPro" id="IPR001892">
    <property type="entry name" value="Ribosomal_uS13"/>
</dbReference>
<dbReference type="InterPro" id="IPR010979">
    <property type="entry name" value="Ribosomal_uS13-like_H2TH"/>
</dbReference>
<dbReference type="InterPro" id="IPR019980">
    <property type="entry name" value="Ribosomal_uS13_bac-type"/>
</dbReference>
<dbReference type="InterPro" id="IPR018269">
    <property type="entry name" value="Ribosomal_uS13_CS"/>
</dbReference>
<dbReference type="NCBIfam" id="TIGR03631">
    <property type="entry name" value="uS13_bact"/>
    <property type="match status" value="1"/>
</dbReference>
<dbReference type="PANTHER" id="PTHR10871">
    <property type="entry name" value="30S RIBOSOMAL PROTEIN S13/40S RIBOSOMAL PROTEIN S18"/>
    <property type="match status" value="1"/>
</dbReference>
<dbReference type="PANTHER" id="PTHR10871:SF1">
    <property type="entry name" value="SMALL RIBOSOMAL SUBUNIT PROTEIN US13M"/>
    <property type="match status" value="1"/>
</dbReference>
<dbReference type="Pfam" id="PF00416">
    <property type="entry name" value="Ribosomal_S13"/>
    <property type="match status" value="1"/>
</dbReference>
<dbReference type="PIRSF" id="PIRSF002134">
    <property type="entry name" value="Ribosomal_S13"/>
    <property type="match status" value="1"/>
</dbReference>
<dbReference type="SUPFAM" id="SSF46946">
    <property type="entry name" value="S13-like H2TH domain"/>
    <property type="match status" value="1"/>
</dbReference>
<dbReference type="PROSITE" id="PS00646">
    <property type="entry name" value="RIBOSOMAL_S13_1"/>
    <property type="match status" value="1"/>
</dbReference>
<dbReference type="PROSITE" id="PS50159">
    <property type="entry name" value="RIBOSOMAL_S13_2"/>
    <property type="match status" value="1"/>
</dbReference>
<protein>
    <recommendedName>
        <fullName evidence="1">Small ribosomal subunit protein uS13</fullName>
    </recommendedName>
    <alternativeName>
        <fullName evidence="3">30S ribosomal protein S13</fullName>
    </alternativeName>
</protein>
<comment type="function">
    <text evidence="1">Located at the top of the head of the 30S subunit, it contacts several helices of the 16S rRNA. In the 70S ribosome it contacts the 23S rRNA (bridge B1a) and protein L5 of the 50S subunit (bridge B1b), connecting the 2 subunits; these bridges are implicated in subunit movement. Contacts the tRNAs in the A and P-sites.</text>
</comment>
<comment type="subunit">
    <text evidence="1">Part of the 30S ribosomal subunit. Forms a loose heterodimer with protein S19. Forms two bridges to the 50S subunit in the 70S ribosome.</text>
</comment>
<comment type="similarity">
    <text evidence="1">Belongs to the universal ribosomal protein uS13 family.</text>
</comment>
<feature type="chain" id="PRO_1000165625" description="Small ribosomal subunit protein uS13">
    <location>
        <begin position="1"/>
        <end position="121"/>
    </location>
</feature>
<feature type="region of interest" description="Disordered" evidence="2">
    <location>
        <begin position="91"/>
        <end position="121"/>
    </location>
</feature>
<feature type="compositionally biased region" description="Basic residues" evidence="2">
    <location>
        <begin position="106"/>
        <end position="121"/>
    </location>
</feature>
<evidence type="ECO:0000255" key="1">
    <source>
        <dbReference type="HAMAP-Rule" id="MF_01315"/>
    </source>
</evidence>
<evidence type="ECO:0000256" key="2">
    <source>
        <dbReference type="SAM" id="MobiDB-lite"/>
    </source>
</evidence>
<evidence type="ECO:0000305" key="3"/>
<keyword id="KW-1185">Reference proteome</keyword>
<keyword id="KW-0687">Ribonucleoprotein</keyword>
<keyword id="KW-0689">Ribosomal protein</keyword>
<keyword id="KW-0694">RNA-binding</keyword>
<keyword id="KW-0699">rRNA-binding</keyword>
<keyword id="KW-0820">tRNA-binding</keyword>
<gene>
    <name evidence="1" type="primary">rpsM</name>
    <name type="ordered locus">MCCL_0219</name>
</gene>
<organism>
    <name type="scientific">Macrococcus caseolyticus (strain JCSC5402)</name>
    <name type="common">Macrococcoides caseolyticum</name>
    <dbReference type="NCBI Taxonomy" id="458233"/>
    <lineage>
        <taxon>Bacteria</taxon>
        <taxon>Bacillati</taxon>
        <taxon>Bacillota</taxon>
        <taxon>Bacilli</taxon>
        <taxon>Bacillales</taxon>
        <taxon>Staphylococcaceae</taxon>
        <taxon>Macrococcoides</taxon>
    </lineage>
</organism>
<sequence>MARIAGVDVPREKRVVIALTYIYGIGRTSAQKILAEANVSEDTRVRDLTEDELGRIREIVDGYKVEGDLRREVNLNIKRLMEIASYRGIRHRRGLPTRGQNTKNNARTRKGPVKTVANKKK</sequence>
<reference key="1">
    <citation type="journal article" date="2009" name="J. Bacteriol.">
        <title>Complete genome sequence of Macrococcus caseolyticus strain JCSCS5402, reflecting the ancestral genome of the human-pathogenic staphylococci.</title>
        <authorList>
            <person name="Baba T."/>
            <person name="Kuwahara-Arai K."/>
            <person name="Uchiyama I."/>
            <person name="Takeuchi F."/>
            <person name="Ito T."/>
            <person name="Hiramatsu K."/>
        </authorList>
    </citation>
    <scope>NUCLEOTIDE SEQUENCE [LARGE SCALE GENOMIC DNA]</scope>
    <source>
        <strain>JCSC5402</strain>
    </source>
</reference>